<accession>Q9P107</accession>
<accession>A0AVN9</accession>
<accession>B7ZLZ0</accession>
<protein>
    <recommendedName>
        <fullName>GEM-interacting protein</fullName>
        <shortName>GMIP</shortName>
    </recommendedName>
</protein>
<comment type="function">
    <text evidence="6">Stimulates, in vitro and in vivo, the GTPase activity of RhoA.</text>
</comment>
<comment type="subunit">
    <text evidence="6">Interacts with GEM through its N-terminal.</text>
</comment>
<comment type="interaction">
    <interactant intactId="EBI-11603420">
        <id>Q9P107</id>
    </interactant>
    <interactant intactId="EBI-2825900">
        <id>Q92619</id>
        <label>ARHGAP45</label>
    </interactant>
    <organismsDiffer>false</organismsDiffer>
    <experiments>3</experiments>
</comment>
<comment type="alternative products">
    <event type="alternative splicing"/>
    <isoform>
        <id>Q9P107-1</id>
        <name>1</name>
        <sequence type="displayed"/>
    </isoform>
    <isoform>
        <id>Q9P107-2</id>
        <name>2</name>
        <sequence type="described" ref="VSP_056142"/>
    </isoform>
</comment>
<organism>
    <name type="scientific">Homo sapiens</name>
    <name type="common">Human</name>
    <dbReference type="NCBI Taxonomy" id="9606"/>
    <lineage>
        <taxon>Eukaryota</taxon>
        <taxon>Metazoa</taxon>
        <taxon>Chordata</taxon>
        <taxon>Craniata</taxon>
        <taxon>Vertebrata</taxon>
        <taxon>Euteleostomi</taxon>
        <taxon>Mammalia</taxon>
        <taxon>Eutheria</taxon>
        <taxon>Euarchontoglires</taxon>
        <taxon>Primates</taxon>
        <taxon>Haplorrhini</taxon>
        <taxon>Catarrhini</taxon>
        <taxon>Hominidae</taxon>
        <taxon>Homo</taxon>
    </lineage>
</organism>
<name>GMIP_HUMAN</name>
<evidence type="ECO:0000250" key="1">
    <source>
        <dbReference type="UniProtKB" id="Q6PGG2"/>
    </source>
</evidence>
<evidence type="ECO:0000255" key="2">
    <source>
        <dbReference type="PROSITE-ProRule" id="PRU00172"/>
    </source>
</evidence>
<evidence type="ECO:0000255" key="3">
    <source>
        <dbReference type="PROSITE-ProRule" id="PRU00226"/>
    </source>
</evidence>
<evidence type="ECO:0000255" key="4">
    <source>
        <dbReference type="PROSITE-ProRule" id="PRU01077"/>
    </source>
</evidence>
<evidence type="ECO:0000256" key="5">
    <source>
        <dbReference type="SAM" id="MobiDB-lite"/>
    </source>
</evidence>
<evidence type="ECO:0000269" key="6">
    <source>
    </source>
</evidence>
<evidence type="ECO:0000303" key="7">
    <source>
    </source>
</evidence>
<evidence type="ECO:0000305" key="8"/>
<evidence type="ECO:0007744" key="9">
    <source>
    </source>
</evidence>
<evidence type="ECO:0007744" key="10">
    <source>
    </source>
</evidence>
<evidence type="ECO:0007744" key="11">
    <source>
    </source>
</evidence>
<evidence type="ECO:0007744" key="12">
    <source>
    </source>
</evidence>
<evidence type="ECO:0007744" key="13">
    <source>
    </source>
</evidence>
<evidence type="ECO:0007829" key="14">
    <source>
        <dbReference type="PDB" id="3QWE"/>
    </source>
</evidence>
<keyword id="KW-0002">3D-structure</keyword>
<keyword id="KW-0025">Alternative splicing</keyword>
<keyword id="KW-0175">Coiled coil</keyword>
<keyword id="KW-0343">GTPase activation</keyword>
<keyword id="KW-0479">Metal-binding</keyword>
<keyword id="KW-0597">Phosphoprotein</keyword>
<keyword id="KW-1267">Proteomics identification</keyword>
<keyword id="KW-1185">Reference proteome</keyword>
<keyword id="KW-0862">Zinc</keyword>
<keyword id="KW-0863">Zinc-finger</keyword>
<sequence>MDAAEPGLPPGPEGRKRYSDIFRSLDNLEISLGNVTLEMLAGDPLLSEDPEPDKTPTATVTNEASCWSGPSPEGPVPLTGEELDLRLIRTKGGVDAALEYAKTWSRYAKELLAWTEKRASYELEFAKSTMKIAEAGKVSIQQQSHMPLQYIYTLFLEHDLSLGTLAMETVAQQKRDYYQPLAAKRTEIEKWRKEFKEQWMKEQKRMNEAVQALRRAQLQYVQRSEDLRARSQGSPEDSAPQASPGPSKQQERRRRSREEAQAKAQEAEALYQACVREANARQQDLEIAKQRIVSHVRKLVFQGDEVLRRVTLSLFGLRGAQAERGPRAFAALAECCAPFEPGQRYQEFVRALRPEAPPPPPPAFSFQEFLPSLNSSPLDIRKKLSGPLPPRLDENSAEPGPWEDPGTGWRWQGTPGPTPGSDVDSVGGGSESRSLDSPTSSPGAGTRQLVKASSTGTESSDDFEERDPDLGDGLENGLGSPFGKWTLSSAAQTHQLRRLRGPAKCRECEAFMVSGTECEECFLTCHKRCLETLLILCGHRRLPARTPLFGVDFLQLPRDFPEEVPFVVTKCTAEIEHRALDVQGIYRVSGSRVRVERLCQAFENGRALVELSGNSPHDVSSVLKRFLQELTEPVIPFHLYDAFISLAKTLHADPGDDPGTPSPSPEVIRSLKTLLVQLPDSNYNTLRHLVAHLFRVAARFMENKMSANNLGIVFGPTLLRPPDGPRAASAIPVTCLLDSGHQAQLVEFLIVHYEQIFGMDELPQATEPPPQDSSPAPGPLTTSSQPPPPHLDPDSQPPVLASDPGPDPQHHSTLEQHPTATPTEIPTPQSDQREDVAEDTKDGGGEVSSQGPEDSLLGTQSRGHFSRQPVKYPRGGVRPVTHQLSSLALVASKLCEETPITSVPRGSLRGRGPSPAAASPEGSPLRRTPLPKHFEITQETARLLSKLDSEAVPRATCCPDVQPEEAEDHL</sequence>
<gene>
    <name type="primary">GMIP</name>
</gene>
<dbReference type="EMBL" id="AF132541">
    <property type="protein sequence ID" value="AAF61330.1"/>
    <property type="molecule type" value="mRNA"/>
</dbReference>
<dbReference type="EMBL" id="AC011458">
    <property type="status" value="NOT_ANNOTATED_CDS"/>
    <property type="molecule type" value="Genomic_DNA"/>
</dbReference>
<dbReference type="EMBL" id="CH471106">
    <property type="protein sequence ID" value="EAW84839.1"/>
    <property type="molecule type" value="Genomic_DNA"/>
</dbReference>
<dbReference type="EMBL" id="BC126436">
    <property type="protein sequence ID" value="AAI26437.1"/>
    <property type="molecule type" value="mRNA"/>
</dbReference>
<dbReference type="EMBL" id="BC144142">
    <property type="protein sequence ID" value="AAI44143.1"/>
    <property type="molecule type" value="mRNA"/>
</dbReference>
<dbReference type="CCDS" id="CCDS12408.1">
    <molecule id="Q9P107-1"/>
</dbReference>
<dbReference type="CCDS" id="CCDS74318.1">
    <molecule id="Q9P107-2"/>
</dbReference>
<dbReference type="PIR" id="D59435">
    <property type="entry name" value="D59435"/>
</dbReference>
<dbReference type="RefSeq" id="NP_001275927.1">
    <property type="nucleotide sequence ID" value="NM_001288998.1"/>
</dbReference>
<dbReference type="RefSeq" id="NP_001275928.1">
    <molecule id="Q9P107-2"/>
    <property type="nucleotide sequence ID" value="NM_001288999.2"/>
</dbReference>
<dbReference type="RefSeq" id="NP_057657.2">
    <molecule id="Q9P107-1"/>
    <property type="nucleotide sequence ID" value="NM_016573.4"/>
</dbReference>
<dbReference type="PDB" id="3QWE">
    <property type="method" value="X-ray"/>
    <property type="resolution" value="2.40 A"/>
    <property type="chains" value="A=80-357"/>
</dbReference>
<dbReference type="PDBsum" id="3QWE"/>
<dbReference type="SMR" id="Q9P107"/>
<dbReference type="BioGRID" id="119442">
    <property type="interactions" value="33"/>
</dbReference>
<dbReference type="FunCoup" id="Q9P107">
    <property type="interactions" value="880"/>
</dbReference>
<dbReference type="IntAct" id="Q9P107">
    <property type="interactions" value="13"/>
</dbReference>
<dbReference type="STRING" id="9606.ENSP00000203556"/>
<dbReference type="GlyGen" id="Q9P107">
    <property type="glycosylation" value="1 site"/>
</dbReference>
<dbReference type="iPTMnet" id="Q9P107"/>
<dbReference type="PhosphoSitePlus" id="Q9P107"/>
<dbReference type="BioMuta" id="GMIP"/>
<dbReference type="DMDM" id="212286192"/>
<dbReference type="jPOST" id="Q9P107"/>
<dbReference type="MassIVE" id="Q9P107"/>
<dbReference type="PaxDb" id="9606-ENSP00000203556"/>
<dbReference type="PeptideAtlas" id="Q9P107"/>
<dbReference type="ProteomicsDB" id="83629">
    <molecule id="Q9P107-1"/>
</dbReference>
<dbReference type="Pumba" id="Q9P107"/>
<dbReference type="Antibodypedia" id="61622">
    <property type="antibodies" value="77 antibodies from 18 providers"/>
</dbReference>
<dbReference type="DNASU" id="51291"/>
<dbReference type="Ensembl" id="ENST00000203556.9">
    <molecule id="Q9P107-1"/>
    <property type="protein sequence ID" value="ENSP00000203556.3"/>
    <property type="gene ID" value="ENSG00000089639.11"/>
</dbReference>
<dbReference type="Ensembl" id="ENST00000587238.5">
    <molecule id="Q9P107-2"/>
    <property type="protein sequence ID" value="ENSP00000467054.1"/>
    <property type="gene ID" value="ENSG00000089639.11"/>
</dbReference>
<dbReference type="GeneID" id="51291"/>
<dbReference type="KEGG" id="hsa:51291"/>
<dbReference type="MANE-Select" id="ENST00000203556.9">
    <property type="protein sequence ID" value="ENSP00000203556.3"/>
    <property type="RefSeq nucleotide sequence ID" value="NM_016573.4"/>
    <property type="RefSeq protein sequence ID" value="NP_057657.2"/>
</dbReference>
<dbReference type="UCSC" id="uc002nnd.5">
    <molecule id="Q9P107-1"/>
    <property type="organism name" value="human"/>
</dbReference>
<dbReference type="AGR" id="HGNC:24852"/>
<dbReference type="CTD" id="51291"/>
<dbReference type="DisGeNET" id="51291"/>
<dbReference type="GeneCards" id="GMIP"/>
<dbReference type="HGNC" id="HGNC:24852">
    <property type="gene designation" value="GMIP"/>
</dbReference>
<dbReference type="HPA" id="ENSG00000089639">
    <property type="expression patterns" value="Tissue enhanced (bone marrow, lymphoid tissue)"/>
</dbReference>
<dbReference type="MIM" id="609694">
    <property type="type" value="gene"/>
</dbReference>
<dbReference type="neXtProt" id="NX_Q9P107"/>
<dbReference type="OpenTargets" id="ENSG00000089639"/>
<dbReference type="PharmGKB" id="PA134963566"/>
<dbReference type="VEuPathDB" id="HostDB:ENSG00000089639"/>
<dbReference type="eggNOG" id="KOG1453">
    <property type="taxonomic scope" value="Eukaryota"/>
</dbReference>
<dbReference type="GeneTree" id="ENSGT00950000183110"/>
<dbReference type="HOGENOM" id="CLU_006236_1_0_1"/>
<dbReference type="InParanoid" id="Q9P107"/>
<dbReference type="OMA" id="TEYMAFL"/>
<dbReference type="OrthoDB" id="79452at2759"/>
<dbReference type="PAN-GO" id="Q9P107">
    <property type="GO annotations" value="4 GO annotations based on evolutionary models"/>
</dbReference>
<dbReference type="PhylomeDB" id="Q9P107"/>
<dbReference type="TreeFam" id="TF351450"/>
<dbReference type="PathwayCommons" id="Q9P107"/>
<dbReference type="Reactome" id="R-HSA-8980692">
    <property type="pathway name" value="RHOA GTPase cycle"/>
</dbReference>
<dbReference type="Reactome" id="R-HSA-9013148">
    <property type="pathway name" value="CDC42 GTPase cycle"/>
</dbReference>
<dbReference type="Reactome" id="R-HSA-9013149">
    <property type="pathway name" value="RAC1 GTPase cycle"/>
</dbReference>
<dbReference type="SignaLink" id="Q9P107"/>
<dbReference type="SIGNOR" id="Q9P107"/>
<dbReference type="BioGRID-ORCS" id="51291">
    <property type="hits" value="27 hits in 1164 CRISPR screens"/>
</dbReference>
<dbReference type="ChiTaRS" id="GMIP">
    <property type="organism name" value="human"/>
</dbReference>
<dbReference type="EvolutionaryTrace" id="Q9P107"/>
<dbReference type="GenomeRNAi" id="51291"/>
<dbReference type="Pharos" id="Q9P107">
    <property type="development level" value="Tbio"/>
</dbReference>
<dbReference type="PRO" id="PR:Q9P107"/>
<dbReference type="Proteomes" id="UP000005640">
    <property type="component" value="Chromosome 19"/>
</dbReference>
<dbReference type="RNAct" id="Q9P107">
    <property type="molecule type" value="protein"/>
</dbReference>
<dbReference type="Bgee" id="ENSG00000089639">
    <property type="expression patterns" value="Expressed in granulocyte and 141 other cell types or tissues"/>
</dbReference>
<dbReference type="ExpressionAtlas" id="Q9P107">
    <property type="expression patterns" value="baseline and differential"/>
</dbReference>
<dbReference type="GO" id="GO:0005829">
    <property type="term" value="C:cytosol"/>
    <property type="evidence" value="ECO:0000314"/>
    <property type="project" value="HPA"/>
</dbReference>
<dbReference type="GO" id="GO:0005654">
    <property type="term" value="C:nucleoplasm"/>
    <property type="evidence" value="ECO:0000314"/>
    <property type="project" value="HPA"/>
</dbReference>
<dbReference type="GO" id="GO:0005886">
    <property type="term" value="C:plasma membrane"/>
    <property type="evidence" value="ECO:0000314"/>
    <property type="project" value="HPA"/>
</dbReference>
<dbReference type="GO" id="GO:0005096">
    <property type="term" value="F:GTPase activator activity"/>
    <property type="evidence" value="ECO:0000314"/>
    <property type="project" value="HGNC-UCL"/>
</dbReference>
<dbReference type="GO" id="GO:0008270">
    <property type="term" value="F:zinc ion binding"/>
    <property type="evidence" value="ECO:0007669"/>
    <property type="project" value="UniProtKB-KW"/>
</dbReference>
<dbReference type="GO" id="GO:0035556">
    <property type="term" value="P:intracellular signal transduction"/>
    <property type="evidence" value="ECO:0000318"/>
    <property type="project" value="GO_Central"/>
</dbReference>
<dbReference type="GO" id="GO:0051058">
    <property type="term" value="P:negative regulation of small GTPase mediated signal transduction"/>
    <property type="evidence" value="ECO:0000318"/>
    <property type="project" value="GO_Central"/>
</dbReference>
<dbReference type="GO" id="GO:0051056">
    <property type="term" value="P:regulation of small GTPase mediated signal transduction"/>
    <property type="evidence" value="ECO:0000304"/>
    <property type="project" value="Reactome"/>
</dbReference>
<dbReference type="GO" id="GO:0007264">
    <property type="term" value="P:small GTPase-mediated signal transduction"/>
    <property type="evidence" value="ECO:0000314"/>
    <property type="project" value="HGNC-UCL"/>
</dbReference>
<dbReference type="CDD" id="cd20816">
    <property type="entry name" value="C1_GMIP-like"/>
    <property type="match status" value="1"/>
</dbReference>
<dbReference type="CDD" id="cd04378">
    <property type="entry name" value="RhoGAP_GMIP_PARG1"/>
    <property type="match status" value="1"/>
</dbReference>
<dbReference type="FunFam" id="1.20.1270.60:FF:000040">
    <property type="entry name" value="GEM-interacting protein isoform X1"/>
    <property type="match status" value="1"/>
</dbReference>
<dbReference type="Gene3D" id="3.30.60.20">
    <property type="match status" value="1"/>
</dbReference>
<dbReference type="Gene3D" id="1.20.1270.60">
    <property type="entry name" value="Arfaptin homology (AH) domain/BAR domain"/>
    <property type="match status" value="1"/>
</dbReference>
<dbReference type="Gene3D" id="1.10.555.10">
    <property type="entry name" value="Rho GTPase activation protein"/>
    <property type="match status" value="1"/>
</dbReference>
<dbReference type="InterPro" id="IPR027267">
    <property type="entry name" value="AH/BAR_dom_sf"/>
</dbReference>
<dbReference type="InterPro" id="IPR046349">
    <property type="entry name" value="C1-like_sf"/>
</dbReference>
<dbReference type="InterPro" id="IPR031160">
    <property type="entry name" value="F_BAR"/>
</dbReference>
<dbReference type="InterPro" id="IPR054713">
    <property type="entry name" value="GMIP/FCHO2-like_FCH"/>
</dbReference>
<dbReference type="InterPro" id="IPR002219">
    <property type="entry name" value="PE/DAG-bd"/>
</dbReference>
<dbReference type="InterPro" id="IPR008936">
    <property type="entry name" value="Rho_GTPase_activation_prot"/>
</dbReference>
<dbReference type="InterPro" id="IPR051025">
    <property type="entry name" value="RhoGAP"/>
</dbReference>
<dbReference type="InterPro" id="IPR000198">
    <property type="entry name" value="RhoGAP_dom"/>
</dbReference>
<dbReference type="PANTHER" id="PTHR15228:SF16">
    <property type="entry name" value="GEM-INTERACTING PROTEIN"/>
    <property type="match status" value="1"/>
</dbReference>
<dbReference type="PANTHER" id="PTHR15228">
    <property type="entry name" value="SPERMATHECAL PHYSIOLOGY VARIANT"/>
    <property type="match status" value="1"/>
</dbReference>
<dbReference type="Pfam" id="PF22699">
    <property type="entry name" value="GMIP-like_FCH"/>
    <property type="match status" value="1"/>
</dbReference>
<dbReference type="Pfam" id="PF00620">
    <property type="entry name" value="RhoGAP"/>
    <property type="match status" value="1"/>
</dbReference>
<dbReference type="SMART" id="SM00109">
    <property type="entry name" value="C1"/>
    <property type="match status" value="1"/>
</dbReference>
<dbReference type="SMART" id="SM00324">
    <property type="entry name" value="RhoGAP"/>
    <property type="match status" value="1"/>
</dbReference>
<dbReference type="SUPFAM" id="SSF103657">
    <property type="entry name" value="BAR/IMD domain-like"/>
    <property type="match status" value="1"/>
</dbReference>
<dbReference type="SUPFAM" id="SSF57889">
    <property type="entry name" value="Cysteine-rich domain"/>
    <property type="match status" value="1"/>
</dbReference>
<dbReference type="SUPFAM" id="SSF48350">
    <property type="entry name" value="GTPase activation domain, GAP"/>
    <property type="match status" value="1"/>
</dbReference>
<dbReference type="PROSITE" id="PS51741">
    <property type="entry name" value="F_BAR"/>
    <property type="match status" value="1"/>
</dbReference>
<dbReference type="PROSITE" id="PS50238">
    <property type="entry name" value="RHOGAP"/>
    <property type="match status" value="1"/>
</dbReference>
<dbReference type="PROSITE" id="PS00479">
    <property type="entry name" value="ZF_DAG_PE_1"/>
    <property type="match status" value="1"/>
</dbReference>
<dbReference type="PROSITE" id="PS50081">
    <property type="entry name" value="ZF_DAG_PE_2"/>
    <property type="match status" value="1"/>
</dbReference>
<feature type="chain" id="PRO_0000056725" description="GEM-interacting protein">
    <location>
        <begin position="1"/>
        <end position="970"/>
    </location>
</feature>
<feature type="domain" description="F-BAR" evidence="4">
    <location>
        <begin position="81"/>
        <end position="344"/>
    </location>
</feature>
<feature type="domain" description="Rho-GAP" evidence="2">
    <location>
        <begin position="554"/>
        <end position="757"/>
    </location>
</feature>
<feature type="zinc finger region" description="Phorbol-ester/DAG-type" evidence="3">
    <location>
        <begin position="493"/>
        <end position="537"/>
    </location>
</feature>
<feature type="region of interest" description="Disordered" evidence="5">
    <location>
        <begin position="44"/>
        <end position="76"/>
    </location>
</feature>
<feature type="region of interest" description="Disordered" evidence="5">
    <location>
        <begin position="224"/>
        <end position="263"/>
    </location>
</feature>
<feature type="region of interest" description="Disordered" evidence="5">
    <location>
        <begin position="377"/>
        <end position="478"/>
    </location>
</feature>
<feature type="region of interest" description="Disordered" evidence="5">
    <location>
        <begin position="762"/>
        <end position="878"/>
    </location>
</feature>
<feature type="region of interest" description="Disordered" evidence="5">
    <location>
        <begin position="897"/>
        <end position="932"/>
    </location>
</feature>
<feature type="compositionally biased region" description="Polar residues" evidence="5">
    <location>
        <begin position="56"/>
        <end position="65"/>
    </location>
</feature>
<feature type="compositionally biased region" description="Polar residues" evidence="5">
    <location>
        <begin position="231"/>
        <end position="246"/>
    </location>
</feature>
<feature type="compositionally biased region" description="Acidic residues" evidence="5">
    <location>
        <begin position="459"/>
        <end position="472"/>
    </location>
</feature>
<feature type="compositionally biased region" description="Pro residues" evidence="5">
    <location>
        <begin position="766"/>
        <end position="778"/>
    </location>
</feature>
<feature type="compositionally biased region" description="Polar residues" evidence="5">
    <location>
        <begin position="815"/>
        <end position="830"/>
    </location>
</feature>
<feature type="compositionally biased region" description="Basic and acidic residues" evidence="5">
    <location>
        <begin position="831"/>
        <end position="844"/>
    </location>
</feature>
<feature type="compositionally biased region" description="Polar residues" evidence="5">
    <location>
        <begin position="847"/>
        <end position="863"/>
    </location>
</feature>
<feature type="compositionally biased region" description="Low complexity" evidence="5">
    <location>
        <begin position="910"/>
        <end position="923"/>
    </location>
</feature>
<feature type="site" description="Arginine finger; crucial for GTP hydrolysis by stabilizing the transition state" evidence="2">
    <location>
        <position position="587"/>
    </location>
</feature>
<feature type="modified residue" description="Phosphoserine" evidence="12">
    <location>
        <position position="19"/>
    </location>
</feature>
<feature type="modified residue" description="Phosphoserine" evidence="1">
    <location>
        <position position="71"/>
    </location>
</feature>
<feature type="modified residue" description="Phosphoserine" evidence="13">
    <location>
        <position position="231"/>
    </location>
</feature>
<feature type="modified residue" description="Phosphoserine" evidence="9 10 11 12">
    <location>
        <position position="234"/>
    </location>
</feature>
<feature type="modified residue" description="Phosphoserine" evidence="9">
    <location>
        <position position="243"/>
    </location>
</feature>
<feature type="modified residue" description="Phosphoserine" evidence="12">
    <location>
        <position position="437"/>
    </location>
</feature>
<feature type="modified residue" description="Phosphoserine" evidence="12">
    <location>
        <position position="441"/>
    </location>
</feature>
<feature type="modified residue" description="Phosphothreonine" evidence="12">
    <location>
        <position position="660"/>
    </location>
</feature>
<feature type="modified residue" description="Phosphoserine" evidence="12">
    <location>
        <position position="885"/>
    </location>
</feature>
<feature type="modified residue" description="Phosphoserine" evidence="12">
    <location>
        <position position="907"/>
    </location>
</feature>
<feature type="modified residue" description="Phosphoserine" evidence="12">
    <location>
        <position position="914"/>
    </location>
</feature>
<feature type="modified residue" description="Phosphoserine" evidence="12">
    <location>
        <position position="919"/>
    </location>
</feature>
<feature type="modified residue" description="Phosphoserine" evidence="12">
    <location>
        <position position="923"/>
    </location>
</feature>
<feature type="splice variant" id="VSP_056142" description="In isoform 2." evidence="7">
    <location>
        <begin position="442"/>
        <end position="467"/>
    </location>
</feature>
<feature type="sequence variant" id="VAR_044518" description="In dbSNP:rs12003.">
    <original>D</original>
    <variation>N</variation>
    <location>
        <position position="641"/>
    </location>
</feature>
<feature type="sequence conflict" description="In Ref. 1; AAF61330." evidence="8" ref="1">
    <original>E</original>
    <variation>D</variation>
    <location>
        <position position="666"/>
    </location>
</feature>
<feature type="sequence conflict" description="In Ref. 1; AAF61330." evidence="8" ref="1">
    <original>S</original>
    <variation>F</variation>
    <location>
        <position position="773"/>
    </location>
</feature>
<feature type="sequence conflict" description="In Ref. 1; AAF61330." evidence="8" ref="1">
    <original>V</original>
    <variation>C</variation>
    <location>
        <position position="870"/>
    </location>
</feature>
<feature type="helix" evidence="14">
    <location>
        <begin position="81"/>
        <end position="89"/>
    </location>
</feature>
<feature type="helix" evidence="14">
    <location>
        <begin position="93"/>
        <end position="140"/>
    </location>
</feature>
<feature type="helix" evidence="14">
    <location>
        <begin position="149"/>
        <end position="176"/>
    </location>
</feature>
<feature type="helix" evidence="14">
    <location>
        <begin position="178"/>
        <end position="229"/>
    </location>
</feature>
<feature type="helix" evidence="14">
    <location>
        <begin position="248"/>
        <end position="322"/>
    </location>
</feature>
<feature type="helix" evidence="14">
    <location>
        <begin position="324"/>
        <end position="335"/>
    </location>
</feature>
<feature type="turn" evidence="14">
    <location>
        <begin position="336"/>
        <end position="338"/>
    </location>
</feature>
<feature type="helix" evidence="14">
    <location>
        <begin position="343"/>
        <end position="351"/>
    </location>
</feature>
<reference key="1">
    <citation type="journal article" date="2002" name="Biochem. J.">
        <title>A novel Rho GTPase-activating-protein interacts with Gem, a member of the Ras superfamily of GTPases.</title>
        <authorList>
            <person name="Aresta S."/>
            <person name="de Tand-Heim M.-F."/>
            <person name="Beranger F."/>
            <person name="de Gunzburg J."/>
        </authorList>
    </citation>
    <scope>NUCLEOTIDE SEQUENCE [MRNA] (ISOFORM 1)</scope>
    <scope>FUNCTION</scope>
    <scope>INTERACTION WITH GEM</scope>
    <source>
        <tissue>Leukemia</tissue>
    </source>
</reference>
<reference key="2">
    <citation type="journal article" date="2004" name="Nature">
        <title>The DNA sequence and biology of human chromosome 19.</title>
        <authorList>
            <person name="Grimwood J."/>
            <person name="Gordon L.A."/>
            <person name="Olsen A.S."/>
            <person name="Terry A."/>
            <person name="Schmutz J."/>
            <person name="Lamerdin J.E."/>
            <person name="Hellsten U."/>
            <person name="Goodstein D."/>
            <person name="Couronne O."/>
            <person name="Tran-Gyamfi M."/>
            <person name="Aerts A."/>
            <person name="Altherr M."/>
            <person name="Ashworth L."/>
            <person name="Bajorek E."/>
            <person name="Black S."/>
            <person name="Branscomb E."/>
            <person name="Caenepeel S."/>
            <person name="Carrano A.V."/>
            <person name="Caoile C."/>
            <person name="Chan Y.M."/>
            <person name="Christensen M."/>
            <person name="Cleland C.A."/>
            <person name="Copeland A."/>
            <person name="Dalin E."/>
            <person name="Dehal P."/>
            <person name="Denys M."/>
            <person name="Detter J.C."/>
            <person name="Escobar J."/>
            <person name="Flowers D."/>
            <person name="Fotopulos D."/>
            <person name="Garcia C."/>
            <person name="Georgescu A.M."/>
            <person name="Glavina T."/>
            <person name="Gomez M."/>
            <person name="Gonzales E."/>
            <person name="Groza M."/>
            <person name="Hammon N."/>
            <person name="Hawkins T."/>
            <person name="Haydu L."/>
            <person name="Ho I."/>
            <person name="Huang W."/>
            <person name="Israni S."/>
            <person name="Jett J."/>
            <person name="Kadner K."/>
            <person name="Kimball H."/>
            <person name="Kobayashi A."/>
            <person name="Larionov V."/>
            <person name="Leem S.-H."/>
            <person name="Lopez F."/>
            <person name="Lou Y."/>
            <person name="Lowry S."/>
            <person name="Malfatti S."/>
            <person name="Martinez D."/>
            <person name="McCready P.M."/>
            <person name="Medina C."/>
            <person name="Morgan J."/>
            <person name="Nelson K."/>
            <person name="Nolan M."/>
            <person name="Ovcharenko I."/>
            <person name="Pitluck S."/>
            <person name="Pollard M."/>
            <person name="Popkie A.P."/>
            <person name="Predki P."/>
            <person name="Quan G."/>
            <person name="Ramirez L."/>
            <person name="Rash S."/>
            <person name="Retterer J."/>
            <person name="Rodriguez A."/>
            <person name="Rogers S."/>
            <person name="Salamov A."/>
            <person name="Salazar A."/>
            <person name="She X."/>
            <person name="Smith D."/>
            <person name="Slezak T."/>
            <person name="Solovyev V."/>
            <person name="Thayer N."/>
            <person name="Tice H."/>
            <person name="Tsai M."/>
            <person name="Ustaszewska A."/>
            <person name="Vo N."/>
            <person name="Wagner M."/>
            <person name="Wheeler J."/>
            <person name="Wu K."/>
            <person name="Xie G."/>
            <person name="Yang J."/>
            <person name="Dubchak I."/>
            <person name="Furey T.S."/>
            <person name="DeJong P."/>
            <person name="Dickson M."/>
            <person name="Gordon D."/>
            <person name="Eichler E.E."/>
            <person name="Pennacchio L.A."/>
            <person name="Richardson P."/>
            <person name="Stubbs L."/>
            <person name="Rokhsar D.S."/>
            <person name="Myers R.M."/>
            <person name="Rubin E.M."/>
            <person name="Lucas S.M."/>
        </authorList>
    </citation>
    <scope>NUCLEOTIDE SEQUENCE [LARGE SCALE GENOMIC DNA]</scope>
</reference>
<reference key="3">
    <citation type="submission" date="2005-07" db="EMBL/GenBank/DDBJ databases">
        <authorList>
            <person name="Mural R.J."/>
            <person name="Istrail S."/>
            <person name="Sutton G.G."/>
            <person name="Florea L."/>
            <person name="Halpern A.L."/>
            <person name="Mobarry C.M."/>
            <person name="Lippert R."/>
            <person name="Walenz B."/>
            <person name="Shatkay H."/>
            <person name="Dew I."/>
            <person name="Miller J.R."/>
            <person name="Flanigan M.J."/>
            <person name="Edwards N.J."/>
            <person name="Bolanos R."/>
            <person name="Fasulo D."/>
            <person name="Halldorsson B.V."/>
            <person name="Hannenhalli S."/>
            <person name="Turner R."/>
            <person name="Yooseph S."/>
            <person name="Lu F."/>
            <person name="Nusskern D.R."/>
            <person name="Shue B.C."/>
            <person name="Zheng X.H."/>
            <person name="Zhong F."/>
            <person name="Delcher A.L."/>
            <person name="Huson D.H."/>
            <person name="Kravitz S.A."/>
            <person name="Mouchard L."/>
            <person name="Reinert K."/>
            <person name="Remington K.A."/>
            <person name="Clark A.G."/>
            <person name="Waterman M.S."/>
            <person name="Eichler E.E."/>
            <person name="Adams M.D."/>
            <person name="Hunkapiller M.W."/>
            <person name="Myers E.W."/>
            <person name="Venter J.C."/>
        </authorList>
    </citation>
    <scope>NUCLEOTIDE SEQUENCE [LARGE SCALE GENOMIC DNA]</scope>
</reference>
<reference key="4">
    <citation type="journal article" date="2004" name="Genome Res.">
        <title>The status, quality, and expansion of the NIH full-length cDNA project: the Mammalian Gene Collection (MGC).</title>
        <authorList>
            <consortium name="The MGC Project Team"/>
        </authorList>
    </citation>
    <scope>NUCLEOTIDE SEQUENCE [LARGE SCALE MRNA] (ISOFORMS 1 AND 2)</scope>
    <source>
        <tissue>Brain</tissue>
    </source>
</reference>
<reference key="5">
    <citation type="journal article" date="2006" name="Nat. Biotechnol.">
        <title>A probability-based approach for high-throughput protein phosphorylation analysis and site localization.</title>
        <authorList>
            <person name="Beausoleil S.A."/>
            <person name="Villen J."/>
            <person name="Gerber S.A."/>
            <person name="Rush J."/>
            <person name="Gygi S.P."/>
        </authorList>
    </citation>
    <scope>IDENTIFICATION BY MASS SPECTROMETRY [LARGE SCALE ANALYSIS]</scope>
    <source>
        <tissue>Cervix carcinoma</tissue>
    </source>
</reference>
<reference key="6">
    <citation type="journal article" date="2008" name="J. Proteome Res.">
        <title>Phosphoproteome of resting human platelets.</title>
        <authorList>
            <person name="Zahedi R.P."/>
            <person name="Lewandrowski U."/>
            <person name="Wiesner J."/>
            <person name="Wortelkamp S."/>
            <person name="Moebius J."/>
            <person name="Schuetz C."/>
            <person name="Walter U."/>
            <person name="Gambaryan S."/>
            <person name="Sickmann A."/>
        </authorList>
    </citation>
    <scope>IDENTIFICATION BY MASS SPECTROMETRY [LARGE SCALE ANALYSIS]</scope>
    <source>
        <tissue>Platelet</tissue>
    </source>
</reference>
<reference key="7">
    <citation type="journal article" date="2008" name="Proc. Natl. Acad. Sci. U.S.A.">
        <title>A quantitative atlas of mitotic phosphorylation.</title>
        <authorList>
            <person name="Dephoure N."/>
            <person name="Zhou C."/>
            <person name="Villen J."/>
            <person name="Beausoleil S.A."/>
            <person name="Bakalarski C.E."/>
            <person name="Elledge S.J."/>
            <person name="Gygi S.P."/>
        </authorList>
    </citation>
    <scope>PHOSPHORYLATION [LARGE SCALE ANALYSIS] AT SER-234 AND SER-243</scope>
    <scope>IDENTIFICATION BY MASS SPECTROMETRY [LARGE SCALE ANALYSIS]</scope>
    <source>
        <tissue>Cervix carcinoma</tissue>
    </source>
</reference>
<reference key="8">
    <citation type="journal article" date="2009" name="Anal. Chem.">
        <title>Lys-N and trypsin cover complementary parts of the phosphoproteome in a refined SCX-based approach.</title>
        <authorList>
            <person name="Gauci S."/>
            <person name="Helbig A.O."/>
            <person name="Slijper M."/>
            <person name="Krijgsveld J."/>
            <person name="Heck A.J."/>
            <person name="Mohammed S."/>
        </authorList>
    </citation>
    <scope>IDENTIFICATION BY MASS SPECTROMETRY [LARGE SCALE ANALYSIS]</scope>
</reference>
<reference key="9">
    <citation type="journal article" date="2009" name="Mol. Cell. Proteomics">
        <title>Large-scale proteomics analysis of the human kinome.</title>
        <authorList>
            <person name="Oppermann F.S."/>
            <person name="Gnad F."/>
            <person name="Olsen J.V."/>
            <person name="Hornberger R."/>
            <person name="Greff Z."/>
            <person name="Keri G."/>
            <person name="Mann M."/>
            <person name="Daub H."/>
        </authorList>
    </citation>
    <scope>PHOSPHORYLATION [LARGE SCALE ANALYSIS] AT SER-234</scope>
    <scope>IDENTIFICATION BY MASS SPECTROMETRY [LARGE SCALE ANALYSIS]</scope>
</reference>
<reference key="10">
    <citation type="journal article" date="2009" name="Sci. Signal.">
        <title>Quantitative phosphoproteomic analysis of T cell receptor signaling reveals system-wide modulation of protein-protein interactions.</title>
        <authorList>
            <person name="Mayya V."/>
            <person name="Lundgren D.H."/>
            <person name="Hwang S.-I."/>
            <person name="Rezaul K."/>
            <person name="Wu L."/>
            <person name="Eng J.K."/>
            <person name="Rodionov V."/>
            <person name="Han D.K."/>
        </authorList>
    </citation>
    <scope>PHOSPHORYLATION [LARGE SCALE ANALYSIS] AT SER-234</scope>
    <scope>IDENTIFICATION BY MASS SPECTROMETRY [LARGE SCALE ANALYSIS]</scope>
    <source>
        <tissue>Leukemic T-cell</tissue>
    </source>
</reference>
<reference key="11">
    <citation type="journal article" date="2011" name="BMC Syst. Biol.">
        <title>Initial characterization of the human central proteome.</title>
        <authorList>
            <person name="Burkard T.R."/>
            <person name="Planyavsky M."/>
            <person name="Kaupe I."/>
            <person name="Breitwieser F.P."/>
            <person name="Buerckstuemmer T."/>
            <person name="Bennett K.L."/>
            <person name="Superti-Furga G."/>
            <person name="Colinge J."/>
        </authorList>
    </citation>
    <scope>IDENTIFICATION BY MASS SPECTROMETRY [LARGE SCALE ANALYSIS]</scope>
</reference>
<reference key="12">
    <citation type="journal article" date="2011" name="Sci. Signal.">
        <title>System-wide temporal characterization of the proteome and phosphoproteome of human embryonic stem cell differentiation.</title>
        <authorList>
            <person name="Rigbolt K.T."/>
            <person name="Prokhorova T.A."/>
            <person name="Akimov V."/>
            <person name="Henningsen J."/>
            <person name="Johansen P.T."/>
            <person name="Kratchmarova I."/>
            <person name="Kassem M."/>
            <person name="Mann M."/>
            <person name="Olsen J.V."/>
            <person name="Blagoev B."/>
        </authorList>
    </citation>
    <scope>IDENTIFICATION BY MASS SPECTROMETRY [LARGE SCALE ANALYSIS]</scope>
</reference>
<reference key="13">
    <citation type="journal article" date="2013" name="J. Proteome Res.">
        <title>Toward a comprehensive characterization of a human cancer cell phosphoproteome.</title>
        <authorList>
            <person name="Zhou H."/>
            <person name="Di Palma S."/>
            <person name="Preisinger C."/>
            <person name="Peng M."/>
            <person name="Polat A.N."/>
            <person name="Heck A.J."/>
            <person name="Mohammed S."/>
        </authorList>
    </citation>
    <scope>PHOSPHORYLATION [LARGE SCALE ANALYSIS] AT SER-19; SER-234; SER-437; SER-441; THR-660; SER-885; SER-907; SER-914; SER-919 AND SER-923</scope>
    <scope>IDENTIFICATION BY MASS SPECTROMETRY [LARGE SCALE ANALYSIS]</scope>
    <source>
        <tissue>Cervix carcinoma</tissue>
        <tissue>Erythroleukemia</tissue>
    </source>
</reference>
<reference key="14">
    <citation type="journal article" date="2014" name="J. Proteomics">
        <title>An enzyme assisted RP-RPLC approach for in-depth analysis of human liver phosphoproteome.</title>
        <authorList>
            <person name="Bian Y."/>
            <person name="Song C."/>
            <person name="Cheng K."/>
            <person name="Dong M."/>
            <person name="Wang F."/>
            <person name="Huang J."/>
            <person name="Sun D."/>
            <person name="Wang L."/>
            <person name="Ye M."/>
            <person name="Zou H."/>
        </authorList>
    </citation>
    <scope>PHOSPHORYLATION [LARGE SCALE ANALYSIS] AT SER-231</scope>
    <scope>IDENTIFICATION BY MASS SPECTROMETRY [LARGE SCALE ANALYSIS]</scope>
    <source>
        <tissue>Liver</tissue>
    </source>
</reference>
<reference key="15">
    <citation type="submission" date="2011-03" db="PDB data bank">
        <title>Crystal structure of the N-terminal domain of the GEM interacting protein.</title>
        <authorList>
            <consortium name="Structural genomics consortium (SGC)"/>
        </authorList>
    </citation>
    <scope>X-RAY CRYSTALLOGRAPHY (2.40 ANGSTROMS) OF 80-357</scope>
</reference>
<proteinExistence type="evidence at protein level"/>